<sequence>MIERGKFRSLTLINWNGFFARTFDLDELVTTLSGGNGAGKSTTMAAFVTALIPDLTLLHFRNTTEAGATSGSRDKGLHGKLKAGVCYSMLDTINSRHQRVVVGVRLQQVAGRDRKVDIKPFAIQGLPMSVQPTQLVTETLNERQARVLPLNELKDKLEAMEGVQFKQFNSITDYHSLMFDLGIIARRLRSASDRSKFYRLIEASLYGGISSAITRSLRDYLLPENSGVRKAFQDMEAALRENRMTLEAIRVTQSDRDLFKHLISEATNYVAADYMRHANERRVHLDKALEFRRELHTSRQQLAAEQYKHVDMARELAEHNGAEGDLEADYQAASDHLNLVQTALRQQEKIERYEADLDELQIRLEEQNEVVAEAIERQEENEARAEAAELEVDELKSQLADYQQALDVQQTRAIQYNQAIAALNRAKELCHLPDLTADCAAEWLETFQAKELEATEKMLSLEQKMSMAQTAHSQFEQAYQLVVAINGPLARNEAWDVARELLREGVDQRHLAEQVQPLRMRLSELEQRLREQQEAERLLADFCKRQGKNFDIDELEALHQELEARIASLSDSVSNAREERMALRQEQEQLQSRIQSLMQRAPVWLAAQNSLNQLSEQCGEEFTSSQDVTEYLQQLLEREREAIVERDEVGARKNAVDEEIERLSQPGGSEDQRLNALAERFGGVLLSEIYDDVSLEDAPYFSALYGPSRHAIVVPDLSQVTEHLEGLTDCPEDLYLIEGDPQSFDDSVFSVDELEKAVVVKIADRQWRYSRFPEVPLFGRAARESRIESLHAEREVLSERFATLSFDVQKTQRLHQAFSRFIGSHLAVAFESDPEAEIRQLNSRRVELERALSNHENDNQQQRIQFEQAKEGVTALNRILPRLNLLADDSLADRVDEIRERLDEAQEAARFVQQFGNQLAKLEPIVSVLQSDPEQFEQLKEDYAYSQQMQRDARQQAFALTEVVQRRAHFSYSDSAEMLSGNSDLNEKLRERLEQAEAERTRAREALRGHAAQLSQYNQVLASLKSSYDTKKELLNDLQRELQDIGVRADSGAEERARIRRDELHAQLSNNRSRRNQLEKALTFCEAEMDNLTRKLRKLERDYFEMREQVVTAKAGWCAVMRMVKDNGVERRLHRRELAYLSADDLRSMSDKALGALRLAVADNEHLRDVLRMSEDPKRPERKIQFFVAVYQHLRERIRQDIIRTDDPVEAIEQMEIELSRLTEELTSREQKLAISSRSVANIIRKTIQREQNRIRMLNQGLQNVSFGQVNSVRLNVNVRETHAMLLDVLSEQHEQHQDLFNSNRLTFSEALAKLYQRLNPQIDMGQRAPQTIGEELLDYRNYLEMEVEVNRGSDGWLRAESGALSTGEAIGTGMSILVMVVQSWEDESRRLRGKDISPCRLLFLDEAARLDARSIATLFELCERLQMQLIIAAPENISPEKGTTYKLVRKVFQNTEHVHVVGLRGFAPQLPETLPGSDEAPSQAS</sequence>
<organism>
    <name type="scientific">Escherichia coli (strain 55989 / EAEC)</name>
    <dbReference type="NCBI Taxonomy" id="585055"/>
    <lineage>
        <taxon>Bacteria</taxon>
        <taxon>Pseudomonadati</taxon>
        <taxon>Pseudomonadota</taxon>
        <taxon>Gammaproteobacteria</taxon>
        <taxon>Enterobacterales</taxon>
        <taxon>Enterobacteriaceae</taxon>
        <taxon>Escherichia</taxon>
    </lineage>
</organism>
<proteinExistence type="inferred from homology"/>
<reference key="1">
    <citation type="journal article" date="2009" name="PLoS Genet.">
        <title>Organised genome dynamics in the Escherichia coli species results in highly diverse adaptive paths.</title>
        <authorList>
            <person name="Touchon M."/>
            <person name="Hoede C."/>
            <person name="Tenaillon O."/>
            <person name="Barbe V."/>
            <person name="Baeriswyl S."/>
            <person name="Bidet P."/>
            <person name="Bingen E."/>
            <person name="Bonacorsi S."/>
            <person name="Bouchier C."/>
            <person name="Bouvet O."/>
            <person name="Calteau A."/>
            <person name="Chiapello H."/>
            <person name="Clermont O."/>
            <person name="Cruveiller S."/>
            <person name="Danchin A."/>
            <person name="Diard M."/>
            <person name="Dossat C."/>
            <person name="Karoui M.E."/>
            <person name="Frapy E."/>
            <person name="Garry L."/>
            <person name="Ghigo J.M."/>
            <person name="Gilles A.M."/>
            <person name="Johnson J."/>
            <person name="Le Bouguenec C."/>
            <person name="Lescat M."/>
            <person name="Mangenot S."/>
            <person name="Martinez-Jehanne V."/>
            <person name="Matic I."/>
            <person name="Nassif X."/>
            <person name="Oztas S."/>
            <person name="Petit M.A."/>
            <person name="Pichon C."/>
            <person name="Rouy Z."/>
            <person name="Ruf C.S."/>
            <person name="Schneider D."/>
            <person name="Tourret J."/>
            <person name="Vacherie B."/>
            <person name="Vallenet D."/>
            <person name="Medigue C."/>
            <person name="Rocha E.P.C."/>
            <person name="Denamur E."/>
        </authorList>
    </citation>
    <scope>NUCLEOTIDE SEQUENCE [LARGE SCALE GENOMIC DNA]</scope>
    <source>
        <strain>55989 / EAEC</strain>
    </source>
</reference>
<name>MUKB_ECO55</name>
<accession>B7LE23</accession>
<feature type="chain" id="PRO_1000187468" description="Chromosome partition protein MukB">
    <location>
        <begin position="1"/>
        <end position="1486"/>
    </location>
</feature>
<feature type="region of interest" description="Flexible hinge" evidence="1">
    <location>
        <begin position="666"/>
        <end position="783"/>
    </location>
</feature>
<feature type="coiled-coil region" evidence="1">
    <location>
        <begin position="326"/>
        <end position="418"/>
    </location>
</feature>
<feature type="coiled-coil region" evidence="1">
    <location>
        <begin position="444"/>
        <end position="480"/>
    </location>
</feature>
<feature type="coiled-coil region" evidence="1">
    <location>
        <begin position="509"/>
        <end position="603"/>
    </location>
</feature>
<feature type="coiled-coil region" evidence="1">
    <location>
        <begin position="835"/>
        <end position="923"/>
    </location>
</feature>
<feature type="coiled-coil region" evidence="1">
    <location>
        <begin position="977"/>
        <end position="1115"/>
    </location>
</feature>
<feature type="coiled-coil region" evidence="1">
    <location>
        <begin position="1209"/>
        <end position="1266"/>
    </location>
</feature>
<feature type="binding site" evidence="1">
    <location>
        <begin position="34"/>
        <end position="41"/>
    </location>
    <ligand>
        <name>ATP</name>
        <dbReference type="ChEBI" id="CHEBI:30616"/>
    </ligand>
</feature>
<evidence type="ECO:0000255" key="1">
    <source>
        <dbReference type="HAMAP-Rule" id="MF_01800"/>
    </source>
</evidence>
<gene>
    <name evidence="1" type="primary">mukB</name>
    <name type="ordered locus">EC55989_0970</name>
</gene>
<dbReference type="EMBL" id="CU928145">
    <property type="protein sequence ID" value="CAU96834.1"/>
    <property type="molecule type" value="Genomic_DNA"/>
</dbReference>
<dbReference type="RefSeq" id="WP_000572634.1">
    <property type="nucleotide sequence ID" value="NC_011748.1"/>
</dbReference>
<dbReference type="SMR" id="B7LE23"/>
<dbReference type="GeneID" id="75205326"/>
<dbReference type="KEGG" id="eck:EC55989_0970"/>
<dbReference type="HOGENOM" id="CLU_004430_0_0_6"/>
<dbReference type="Proteomes" id="UP000000746">
    <property type="component" value="Chromosome"/>
</dbReference>
<dbReference type="GO" id="GO:0005737">
    <property type="term" value="C:cytoplasm"/>
    <property type="evidence" value="ECO:0007669"/>
    <property type="project" value="UniProtKB-UniRule"/>
</dbReference>
<dbReference type="GO" id="GO:0009295">
    <property type="term" value="C:nucleoid"/>
    <property type="evidence" value="ECO:0007669"/>
    <property type="project" value="UniProtKB-SubCell"/>
</dbReference>
<dbReference type="GO" id="GO:0005524">
    <property type="term" value="F:ATP binding"/>
    <property type="evidence" value="ECO:0007669"/>
    <property type="project" value="UniProtKB-UniRule"/>
</dbReference>
<dbReference type="GO" id="GO:0003677">
    <property type="term" value="F:DNA binding"/>
    <property type="evidence" value="ECO:0007669"/>
    <property type="project" value="UniProtKB-UniRule"/>
</dbReference>
<dbReference type="GO" id="GO:0051301">
    <property type="term" value="P:cell division"/>
    <property type="evidence" value="ECO:0007669"/>
    <property type="project" value="UniProtKB-KW"/>
</dbReference>
<dbReference type="GO" id="GO:0030261">
    <property type="term" value="P:chromosome condensation"/>
    <property type="evidence" value="ECO:0007669"/>
    <property type="project" value="UniProtKB-KW"/>
</dbReference>
<dbReference type="GO" id="GO:0007059">
    <property type="term" value="P:chromosome segregation"/>
    <property type="evidence" value="ECO:0007669"/>
    <property type="project" value="UniProtKB-UniRule"/>
</dbReference>
<dbReference type="GO" id="GO:0006260">
    <property type="term" value="P:DNA replication"/>
    <property type="evidence" value="ECO:0007669"/>
    <property type="project" value="UniProtKB-UniRule"/>
</dbReference>
<dbReference type="FunFam" id="1.20.58.850:FF:000001">
    <property type="entry name" value="Chromosome partition protein MukB"/>
    <property type="match status" value="1"/>
</dbReference>
<dbReference type="FunFam" id="3.30.70.3500:FF:000001">
    <property type="entry name" value="Chromosome partition protein MukB"/>
    <property type="match status" value="1"/>
</dbReference>
<dbReference type="FunFam" id="3.40.1140.10:FF:000001">
    <property type="entry name" value="Chromosome partition protein MukB"/>
    <property type="match status" value="1"/>
</dbReference>
<dbReference type="FunFam" id="3.40.1140.10:FF:000002">
    <property type="entry name" value="Chromosome partition protein MukB"/>
    <property type="match status" value="1"/>
</dbReference>
<dbReference type="Gene3D" id="1.20.58.850">
    <property type="match status" value="1"/>
</dbReference>
<dbReference type="Gene3D" id="3.40.1140.10">
    <property type="match status" value="2"/>
</dbReference>
<dbReference type="Gene3D" id="1.20.5.420">
    <property type="entry name" value="Immunoglobulin FC, subunit C"/>
    <property type="match status" value="1"/>
</dbReference>
<dbReference type="Gene3D" id="3.30.70.3500">
    <property type="entry name" value="MukB, hinge domain"/>
    <property type="match status" value="1"/>
</dbReference>
<dbReference type="HAMAP" id="MF_01800">
    <property type="entry name" value="MukB"/>
    <property type="match status" value="1"/>
</dbReference>
<dbReference type="InterPro" id="IPR012090">
    <property type="entry name" value="MukB"/>
</dbReference>
<dbReference type="InterPro" id="IPR050308">
    <property type="entry name" value="MukB/SMC"/>
</dbReference>
<dbReference type="InterPro" id="IPR032520">
    <property type="entry name" value="MukB_hinge"/>
</dbReference>
<dbReference type="InterPro" id="IPR042501">
    <property type="entry name" value="MukB_hinge_sf"/>
</dbReference>
<dbReference type="InterPro" id="IPR007406">
    <property type="entry name" value="MukB_N_dom"/>
</dbReference>
<dbReference type="InterPro" id="IPR027417">
    <property type="entry name" value="P-loop_NTPase"/>
</dbReference>
<dbReference type="NCBIfam" id="NF003422">
    <property type="entry name" value="PRK04863.1"/>
    <property type="match status" value="1"/>
</dbReference>
<dbReference type="PANTHER" id="PTHR42963">
    <property type="entry name" value="CHROMOSOME PARTITION PROTEIN MUKB"/>
    <property type="match status" value="1"/>
</dbReference>
<dbReference type="PANTHER" id="PTHR42963:SF1">
    <property type="entry name" value="DUF4476 DOMAIN-CONTAINING PROTEIN"/>
    <property type="match status" value="1"/>
</dbReference>
<dbReference type="Pfam" id="PF04310">
    <property type="entry name" value="MukB"/>
    <property type="match status" value="1"/>
</dbReference>
<dbReference type="Pfam" id="PF16330">
    <property type="entry name" value="MukB_hinge"/>
    <property type="match status" value="1"/>
</dbReference>
<dbReference type="Pfam" id="PF13558">
    <property type="entry name" value="SbcC_Walker_B"/>
    <property type="match status" value="1"/>
</dbReference>
<dbReference type="PIRSF" id="PIRSF005246">
    <property type="entry name" value="MukB"/>
    <property type="match status" value="1"/>
</dbReference>
<dbReference type="SUPFAM" id="SSF52540">
    <property type="entry name" value="P-loop containing nucleoside triphosphate hydrolases"/>
    <property type="match status" value="2"/>
</dbReference>
<keyword id="KW-0067">ATP-binding</keyword>
<keyword id="KW-0131">Cell cycle</keyword>
<keyword id="KW-0132">Cell division</keyword>
<keyword id="KW-0159">Chromosome partition</keyword>
<keyword id="KW-0175">Coiled coil</keyword>
<keyword id="KW-0963">Cytoplasm</keyword>
<keyword id="KW-0226">DNA condensation</keyword>
<keyword id="KW-0238">DNA-binding</keyword>
<keyword id="KW-0547">Nucleotide-binding</keyword>
<keyword id="KW-1185">Reference proteome</keyword>
<comment type="function">
    <text evidence="1">Plays a central role in chromosome condensation, segregation and cell cycle progression. Functions as a homodimer, which is essential for chromosome partition. Involved in negative DNA supercoiling in vivo, and by this means organize and compact chromosomes. May achieve or facilitate chromosome segregation by condensation DNA from both sides of a centrally located replisome during cell division.</text>
</comment>
<comment type="subunit">
    <text evidence="1">Homodimerization via its hinge domain. Binds to DNA via its C-terminal region. Interacts, and probably forms a ternary complex, with MukE and MukF via its C-terminal region. The complex formation is stimulated by calcium or magnesium. Interacts with tubulin-related protein FtsZ.</text>
</comment>
<comment type="subcellular location">
    <subcellularLocation>
        <location evidence="1">Cytoplasm</location>
        <location evidence="1">Nucleoid</location>
    </subcellularLocation>
    <text evidence="1">Restricted to the nucleoid region.</text>
</comment>
<comment type="domain">
    <text evidence="1">The hinge domain, which separates the large intramolecular coiled coil regions, allows the homodimerization, forming a V-shaped homodimer.</text>
</comment>
<comment type="similarity">
    <text evidence="1">Belongs to the SMC family. MukB subfamily.</text>
</comment>
<protein>
    <recommendedName>
        <fullName evidence="1">Chromosome partition protein MukB</fullName>
    </recommendedName>
    <alternativeName>
        <fullName evidence="1">Structural maintenance of chromosome-related protein</fullName>
    </alternativeName>
</protein>